<dbReference type="EMBL" id="CP000283">
    <property type="protein sequence ID" value="ABE40426.1"/>
    <property type="molecule type" value="Genomic_DNA"/>
</dbReference>
<dbReference type="SMR" id="Q134R3"/>
<dbReference type="STRING" id="316057.RPD_3201"/>
<dbReference type="KEGG" id="rpd:RPD_3201"/>
<dbReference type="eggNOG" id="COG0080">
    <property type="taxonomic scope" value="Bacteria"/>
</dbReference>
<dbReference type="HOGENOM" id="CLU_074237_2_1_5"/>
<dbReference type="BioCyc" id="RPAL316057:RPD_RS16065-MONOMER"/>
<dbReference type="Proteomes" id="UP000001818">
    <property type="component" value="Chromosome"/>
</dbReference>
<dbReference type="GO" id="GO:0022625">
    <property type="term" value="C:cytosolic large ribosomal subunit"/>
    <property type="evidence" value="ECO:0007669"/>
    <property type="project" value="TreeGrafter"/>
</dbReference>
<dbReference type="GO" id="GO:0070180">
    <property type="term" value="F:large ribosomal subunit rRNA binding"/>
    <property type="evidence" value="ECO:0007669"/>
    <property type="project" value="UniProtKB-UniRule"/>
</dbReference>
<dbReference type="GO" id="GO:0003735">
    <property type="term" value="F:structural constituent of ribosome"/>
    <property type="evidence" value="ECO:0007669"/>
    <property type="project" value="InterPro"/>
</dbReference>
<dbReference type="GO" id="GO:0006412">
    <property type="term" value="P:translation"/>
    <property type="evidence" value="ECO:0007669"/>
    <property type="project" value="UniProtKB-UniRule"/>
</dbReference>
<dbReference type="CDD" id="cd00349">
    <property type="entry name" value="Ribosomal_L11"/>
    <property type="match status" value="1"/>
</dbReference>
<dbReference type="FunFam" id="1.10.10.250:FF:000001">
    <property type="entry name" value="50S ribosomal protein L11"/>
    <property type="match status" value="1"/>
</dbReference>
<dbReference type="FunFam" id="3.30.1550.10:FF:000001">
    <property type="entry name" value="50S ribosomal protein L11"/>
    <property type="match status" value="1"/>
</dbReference>
<dbReference type="Gene3D" id="1.10.10.250">
    <property type="entry name" value="Ribosomal protein L11, C-terminal domain"/>
    <property type="match status" value="1"/>
</dbReference>
<dbReference type="Gene3D" id="3.30.1550.10">
    <property type="entry name" value="Ribosomal protein L11/L12, N-terminal domain"/>
    <property type="match status" value="1"/>
</dbReference>
<dbReference type="HAMAP" id="MF_00736">
    <property type="entry name" value="Ribosomal_uL11"/>
    <property type="match status" value="1"/>
</dbReference>
<dbReference type="InterPro" id="IPR000911">
    <property type="entry name" value="Ribosomal_uL11"/>
</dbReference>
<dbReference type="InterPro" id="IPR006519">
    <property type="entry name" value="Ribosomal_uL11_bac-typ"/>
</dbReference>
<dbReference type="InterPro" id="IPR020783">
    <property type="entry name" value="Ribosomal_uL11_C"/>
</dbReference>
<dbReference type="InterPro" id="IPR036769">
    <property type="entry name" value="Ribosomal_uL11_C_sf"/>
</dbReference>
<dbReference type="InterPro" id="IPR020785">
    <property type="entry name" value="Ribosomal_uL11_CS"/>
</dbReference>
<dbReference type="InterPro" id="IPR020784">
    <property type="entry name" value="Ribosomal_uL11_N"/>
</dbReference>
<dbReference type="InterPro" id="IPR036796">
    <property type="entry name" value="Ribosomal_uL11_N_sf"/>
</dbReference>
<dbReference type="NCBIfam" id="TIGR01632">
    <property type="entry name" value="L11_bact"/>
    <property type="match status" value="1"/>
</dbReference>
<dbReference type="PANTHER" id="PTHR11661">
    <property type="entry name" value="60S RIBOSOMAL PROTEIN L12"/>
    <property type="match status" value="1"/>
</dbReference>
<dbReference type="PANTHER" id="PTHR11661:SF1">
    <property type="entry name" value="LARGE RIBOSOMAL SUBUNIT PROTEIN UL11M"/>
    <property type="match status" value="1"/>
</dbReference>
<dbReference type="Pfam" id="PF00298">
    <property type="entry name" value="Ribosomal_L11"/>
    <property type="match status" value="1"/>
</dbReference>
<dbReference type="Pfam" id="PF03946">
    <property type="entry name" value="Ribosomal_L11_N"/>
    <property type="match status" value="1"/>
</dbReference>
<dbReference type="SMART" id="SM00649">
    <property type="entry name" value="RL11"/>
    <property type="match status" value="1"/>
</dbReference>
<dbReference type="SUPFAM" id="SSF54747">
    <property type="entry name" value="Ribosomal L11/L12e N-terminal domain"/>
    <property type="match status" value="1"/>
</dbReference>
<dbReference type="SUPFAM" id="SSF46906">
    <property type="entry name" value="Ribosomal protein L11, C-terminal domain"/>
    <property type="match status" value="1"/>
</dbReference>
<dbReference type="PROSITE" id="PS00359">
    <property type="entry name" value="RIBOSOMAL_L11"/>
    <property type="match status" value="1"/>
</dbReference>
<gene>
    <name evidence="1" type="primary">rplK</name>
    <name type="ordered locus">RPD_3201</name>
</gene>
<feature type="chain" id="PRO_1000046250" description="Large ribosomal subunit protein uL11">
    <location>
        <begin position="1"/>
        <end position="142"/>
    </location>
</feature>
<keyword id="KW-0488">Methylation</keyword>
<keyword id="KW-0687">Ribonucleoprotein</keyword>
<keyword id="KW-0689">Ribosomal protein</keyword>
<keyword id="KW-0694">RNA-binding</keyword>
<keyword id="KW-0699">rRNA-binding</keyword>
<proteinExistence type="inferred from homology"/>
<protein>
    <recommendedName>
        <fullName evidence="1">Large ribosomal subunit protein uL11</fullName>
    </recommendedName>
    <alternativeName>
        <fullName evidence="2">50S ribosomal protein L11</fullName>
    </alternativeName>
</protein>
<accession>Q134R3</accession>
<evidence type="ECO:0000255" key="1">
    <source>
        <dbReference type="HAMAP-Rule" id="MF_00736"/>
    </source>
</evidence>
<evidence type="ECO:0000305" key="2"/>
<name>RL11_RHOPS</name>
<sequence>MAKKVTGYLKLQVPAGAANPSPPIGPALGQRGLNIMEFCKAFNAQTQKEEKNTPIPVVITIYADRSFTFELKTPPMSFFLKQAAKIQSGSKLPGRDSAGKVTTAQVREIAEKKMKDLNCDSIDSAMRMVEGSARSMGLQVEG</sequence>
<comment type="function">
    <text evidence="1">Forms part of the ribosomal stalk which helps the ribosome interact with GTP-bound translation factors.</text>
</comment>
<comment type="subunit">
    <text evidence="1">Part of the ribosomal stalk of the 50S ribosomal subunit. Interacts with L10 and the large rRNA to form the base of the stalk. L10 forms an elongated spine to which L12 dimers bind in a sequential fashion forming a multimeric L10(L12)X complex.</text>
</comment>
<comment type="PTM">
    <text evidence="1">One or more lysine residues are methylated.</text>
</comment>
<comment type="similarity">
    <text evidence="1">Belongs to the universal ribosomal protein uL11 family.</text>
</comment>
<organism>
    <name type="scientific">Rhodopseudomonas palustris (strain BisB5)</name>
    <dbReference type="NCBI Taxonomy" id="316057"/>
    <lineage>
        <taxon>Bacteria</taxon>
        <taxon>Pseudomonadati</taxon>
        <taxon>Pseudomonadota</taxon>
        <taxon>Alphaproteobacteria</taxon>
        <taxon>Hyphomicrobiales</taxon>
        <taxon>Nitrobacteraceae</taxon>
        <taxon>Rhodopseudomonas</taxon>
    </lineage>
</organism>
<reference key="1">
    <citation type="submission" date="2006-03" db="EMBL/GenBank/DDBJ databases">
        <title>Complete sequence of Rhodopseudomonas palustris BisB5.</title>
        <authorList>
            <consortium name="US DOE Joint Genome Institute"/>
            <person name="Copeland A."/>
            <person name="Lucas S."/>
            <person name="Lapidus A."/>
            <person name="Barry K."/>
            <person name="Detter J.C."/>
            <person name="Glavina del Rio T."/>
            <person name="Hammon N."/>
            <person name="Israni S."/>
            <person name="Dalin E."/>
            <person name="Tice H."/>
            <person name="Pitluck S."/>
            <person name="Chain P."/>
            <person name="Malfatti S."/>
            <person name="Shin M."/>
            <person name="Vergez L."/>
            <person name="Schmutz J."/>
            <person name="Larimer F."/>
            <person name="Land M."/>
            <person name="Hauser L."/>
            <person name="Pelletier D.A."/>
            <person name="Kyrpides N."/>
            <person name="Lykidis A."/>
            <person name="Oda Y."/>
            <person name="Harwood C.S."/>
            <person name="Richardson P."/>
        </authorList>
    </citation>
    <scope>NUCLEOTIDE SEQUENCE [LARGE SCALE GENOMIC DNA]</scope>
    <source>
        <strain>BisB5</strain>
    </source>
</reference>